<accession>Q5PCA8</accession>
<sequence>MSTTDSIVSSQAKQSSWRKSDTTWTLGLFGTAIGAGVLFFPIRAGFGGLIPILLMLVLAYPIAFYCHRALARLCLSGSNPSGNITETVEEHFGKTGGVVITFLYFFAICPLLWIYGVTITNTFMTFWENQLQMPALNRGFVALFLLLLMAFVIWFGKDLMVKVMSYLVWPFIASLVLISLSLIPYWNSAVIDQVDLSNIALTGHDGILVTVWLGISIMVFSFNFSPIVSSFVVSKREEYEKEFGREFTERKCSQIISRASMLMVAVVMFFAFSCLFTLSPQNMADAKAQNIPVLSYLANHFASLSGTKSTFATVLEYGASIIALVAIFKSFFGHYLGTLEGLNGLVLKFGYKGDKTKVSMGKLNTISMIFIMGSTWVVAYANPNILDLIEAMGAPIIASLLCLLPMYAIRKAPSLAKYRGRLDNVFVTLIGLLTILNIVYKLF</sequence>
<gene>
    <name evidence="1" type="primary">tdcC</name>
    <name type="ordered locus">SPA3112</name>
</gene>
<dbReference type="EMBL" id="CP000026">
    <property type="protein sequence ID" value="AAV78943.1"/>
    <property type="molecule type" value="Genomic_DNA"/>
</dbReference>
<dbReference type="RefSeq" id="WP_000108129.1">
    <property type="nucleotide sequence ID" value="NC_006511.1"/>
</dbReference>
<dbReference type="KEGG" id="spt:SPA3112"/>
<dbReference type="HOGENOM" id="CLU_052043_1_1_6"/>
<dbReference type="Proteomes" id="UP000008185">
    <property type="component" value="Chromosome"/>
</dbReference>
<dbReference type="GO" id="GO:0005886">
    <property type="term" value="C:plasma membrane"/>
    <property type="evidence" value="ECO:0007669"/>
    <property type="project" value="UniProtKB-SubCell"/>
</dbReference>
<dbReference type="GO" id="GO:0015194">
    <property type="term" value="F:L-serine transmembrane transporter activity"/>
    <property type="evidence" value="ECO:0007669"/>
    <property type="project" value="InterPro"/>
</dbReference>
<dbReference type="GO" id="GO:0015293">
    <property type="term" value="F:symporter activity"/>
    <property type="evidence" value="ECO:0007669"/>
    <property type="project" value="UniProtKB-UniRule"/>
</dbReference>
<dbReference type="GO" id="GO:0015565">
    <property type="term" value="F:threonine efflux transmembrane transporter activity"/>
    <property type="evidence" value="ECO:0007669"/>
    <property type="project" value="InterPro"/>
</dbReference>
<dbReference type="Gene3D" id="1.20.1740.10">
    <property type="entry name" value="Amino acid/polyamine transporter I"/>
    <property type="match status" value="1"/>
</dbReference>
<dbReference type="HAMAP" id="MF_01583">
    <property type="entry name" value="Thr_Ser_transp_TdcC"/>
    <property type="match status" value="1"/>
</dbReference>
<dbReference type="InterPro" id="IPR018227">
    <property type="entry name" value="Amino_acid_transport_2"/>
</dbReference>
<dbReference type="InterPro" id="IPR004694">
    <property type="entry name" value="Hydroxy_aa_transpt"/>
</dbReference>
<dbReference type="InterPro" id="IPR023726">
    <property type="entry name" value="Thr/Ser_transpt_TdcC"/>
</dbReference>
<dbReference type="NCBIfam" id="NF010152">
    <property type="entry name" value="PRK13629.1"/>
    <property type="match status" value="1"/>
</dbReference>
<dbReference type="NCBIfam" id="TIGR00814">
    <property type="entry name" value="stp"/>
    <property type="match status" value="1"/>
</dbReference>
<dbReference type="PANTHER" id="PTHR35334">
    <property type="entry name" value="SERINE TRANSPORTER"/>
    <property type="match status" value="1"/>
</dbReference>
<dbReference type="PANTHER" id="PTHR35334:SF1">
    <property type="entry name" value="THREONINE_SERINE TRANSPORTER TDCC"/>
    <property type="match status" value="1"/>
</dbReference>
<dbReference type="Pfam" id="PF03222">
    <property type="entry name" value="Trp_Tyr_perm"/>
    <property type="match status" value="1"/>
</dbReference>
<protein>
    <recommendedName>
        <fullName evidence="1">Threonine/serine transporter TdcC</fullName>
    </recommendedName>
    <alternativeName>
        <fullName evidence="1">H(+)/threonine-serine symporter</fullName>
    </alternativeName>
</protein>
<proteinExistence type="inferred from homology"/>
<name>TDCC_SALPA</name>
<keyword id="KW-0029">Amino-acid transport</keyword>
<keyword id="KW-0997">Cell inner membrane</keyword>
<keyword id="KW-1003">Cell membrane</keyword>
<keyword id="KW-0472">Membrane</keyword>
<keyword id="KW-0769">Symport</keyword>
<keyword id="KW-0812">Transmembrane</keyword>
<keyword id="KW-1133">Transmembrane helix</keyword>
<keyword id="KW-0813">Transport</keyword>
<reference key="1">
    <citation type="journal article" date="2004" name="Nat. Genet.">
        <title>Comparison of genome degradation in Paratyphi A and Typhi, human-restricted serovars of Salmonella enterica that cause typhoid.</title>
        <authorList>
            <person name="McClelland M."/>
            <person name="Sanderson K.E."/>
            <person name="Clifton S.W."/>
            <person name="Latreille P."/>
            <person name="Porwollik S."/>
            <person name="Sabo A."/>
            <person name="Meyer R."/>
            <person name="Bieri T."/>
            <person name="Ozersky P."/>
            <person name="McLellan M."/>
            <person name="Harkins C.R."/>
            <person name="Wang C."/>
            <person name="Nguyen C."/>
            <person name="Berghoff A."/>
            <person name="Elliott G."/>
            <person name="Kohlberg S."/>
            <person name="Strong C."/>
            <person name="Du F."/>
            <person name="Carter J."/>
            <person name="Kremizki C."/>
            <person name="Layman D."/>
            <person name="Leonard S."/>
            <person name="Sun H."/>
            <person name="Fulton L."/>
            <person name="Nash W."/>
            <person name="Miner T."/>
            <person name="Minx P."/>
            <person name="Delehaunty K."/>
            <person name="Fronick C."/>
            <person name="Magrini V."/>
            <person name="Nhan M."/>
            <person name="Warren W."/>
            <person name="Florea L."/>
            <person name="Spieth J."/>
            <person name="Wilson R.K."/>
        </authorList>
    </citation>
    <scope>NUCLEOTIDE SEQUENCE [LARGE SCALE GENOMIC DNA]</scope>
    <source>
        <strain>ATCC 9150 / SARB42</strain>
    </source>
</reference>
<evidence type="ECO:0000255" key="1">
    <source>
        <dbReference type="HAMAP-Rule" id="MF_01583"/>
    </source>
</evidence>
<organism>
    <name type="scientific">Salmonella paratyphi A (strain ATCC 9150 / SARB42)</name>
    <dbReference type="NCBI Taxonomy" id="295319"/>
    <lineage>
        <taxon>Bacteria</taxon>
        <taxon>Pseudomonadati</taxon>
        <taxon>Pseudomonadota</taxon>
        <taxon>Gammaproteobacteria</taxon>
        <taxon>Enterobacterales</taxon>
        <taxon>Enterobacteriaceae</taxon>
        <taxon>Salmonella</taxon>
    </lineage>
</organism>
<feature type="chain" id="PRO_0000309169" description="Threonine/serine transporter TdcC">
    <location>
        <begin position="1"/>
        <end position="443"/>
    </location>
</feature>
<feature type="transmembrane region" description="Helical" evidence="1">
    <location>
        <begin position="22"/>
        <end position="42"/>
    </location>
</feature>
<feature type="transmembrane region" description="Helical" evidence="1">
    <location>
        <begin position="44"/>
        <end position="64"/>
    </location>
</feature>
<feature type="transmembrane region" description="Helical" evidence="1">
    <location>
        <begin position="97"/>
        <end position="117"/>
    </location>
</feature>
<feature type="transmembrane region" description="Helical" evidence="1">
    <location>
        <begin position="140"/>
        <end position="160"/>
    </location>
</feature>
<feature type="transmembrane region" description="Helical" evidence="1">
    <location>
        <begin position="163"/>
        <end position="183"/>
    </location>
</feature>
<feature type="transmembrane region" description="Helical" evidence="1">
    <location>
        <begin position="207"/>
        <end position="227"/>
    </location>
</feature>
<feature type="transmembrane region" description="Helical" evidence="1">
    <location>
        <begin position="259"/>
        <end position="279"/>
    </location>
</feature>
<feature type="transmembrane region" description="Helical" evidence="1">
    <location>
        <begin position="319"/>
        <end position="339"/>
    </location>
</feature>
<feature type="transmembrane region" description="Helical" evidence="1">
    <location>
        <begin position="366"/>
        <end position="386"/>
    </location>
</feature>
<feature type="transmembrane region" description="Helical" evidence="1">
    <location>
        <begin position="389"/>
        <end position="409"/>
    </location>
</feature>
<feature type="transmembrane region" description="Helical" evidence="1">
    <location>
        <begin position="423"/>
        <end position="443"/>
    </location>
</feature>
<comment type="function">
    <text evidence="1">Involved in the import of threonine and serine into the cell, with the concomitant import of a proton (symport system).</text>
</comment>
<comment type="catalytic activity">
    <reaction evidence="1">
        <text>L-threonine(in) + H(+)(in) = L-threonine(out) + H(+)(out)</text>
        <dbReference type="Rhea" id="RHEA:28883"/>
        <dbReference type="ChEBI" id="CHEBI:15378"/>
        <dbReference type="ChEBI" id="CHEBI:57926"/>
    </reaction>
    <physiologicalReaction direction="right-to-left" evidence="1">
        <dbReference type="Rhea" id="RHEA:28885"/>
    </physiologicalReaction>
</comment>
<comment type="catalytic activity">
    <reaction evidence="1">
        <text>L-serine(in) + H(+)(in) = L-serine(out) + H(+)(out)</text>
        <dbReference type="Rhea" id="RHEA:28887"/>
        <dbReference type="ChEBI" id="CHEBI:15378"/>
        <dbReference type="ChEBI" id="CHEBI:33384"/>
    </reaction>
    <physiologicalReaction direction="right-to-left" evidence="1">
        <dbReference type="Rhea" id="RHEA:28889"/>
    </physiologicalReaction>
</comment>
<comment type="subcellular location">
    <subcellularLocation>
        <location evidence="1">Cell inner membrane</location>
        <topology evidence="1">Multi-pass membrane protein</topology>
    </subcellularLocation>
</comment>
<comment type="similarity">
    <text evidence="1">Belongs to the amino acid/polyamine transporter 2 family. SdaC/TdcC subfamily.</text>
</comment>